<organism>
    <name type="scientific">Loxosceles deserta</name>
    <name type="common">Desert recluse spider</name>
    <dbReference type="NCBI Taxonomy" id="424440"/>
    <lineage>
        <taxon>Eukaryota</taxon>
        <taxon>Metazoa</taxon>
        <taxon>Ecdysozoa</taxon>
        <taxon>Arthropoda</taxon>
        <taxon>Chelicerata</taxon>
        <taxon>Arachnida</taxon>
        <taxon>Araneae</taxon>
        <taxon>Araneomorphae</taxon>
        <taxon>Haplogynae</taxon>
        <taxon>Scytodoidea</taxon>
        <taxon>Sicariidae</taxon>
        <taxon>Loxosceles</taxon>
    </lineage>
</organism>
<dbReference type="EC" id="4.6.1.-" evidence="4"/>
<dbReference type="EMBL" id="FJ171409">
    <property type="protein sequence ID" value="ACN48905.1"/>
    <property type="molecule type" value="mRNA"/>
</dbReference>
<dbReference type="EMBL" id="FJ171411">
    <property type="protein sequence ID" value="ACN48907.1"/>
    <property type="molecule type" value="mRNA"/>
</dbReference>
<dbReference type="EMBL" id="FJ171413">
    <property type="protein sequence ID" value="ACN48909.1"/>
    <property type="molecule type" value="mRNA"/>
</dbReference>
<dbReference type="SMR" id="C0JAX4"/>
<dbReference type="GO" id="GO:0005576">
    <property type="term" value="C:extracellular region"/>
    <property type="evidence" value="ECO:0007669"/>
    <property type="project" value="UniProtKB-SubCell"/>
</dbReference>
<dbReference type="GO" id="GO:0016829">
    <property type="term" value="F:lyase activity"/>
    <property type="evidence" value="ECO:0007669"/>
    <property type="project" value="UniProtKB-KW"/>
</dbReference>
<dbReference type="GO" id="GO:0046872">
    <property type="term" value="F:metal ion binding"/>
    <property type="evidence" value="ECO:0007669"/>
    <property type="project" value="UniProtKB-KW"/>
</dbReference>
<dbReference type="GO" id="GO:0008081">
    <property type="term" value="F:phosphoric diester hydrolase activity"/>
    <property type="evidence" value="ECO:0007669"/>
    <property type="project" value="InterPro"/>
</dbReference>
<dbReference type="GO" id="GO:0090729">
    <property type="term" value="F:toxin activity"/>
    <property type="evidence" value="ECO:0007669"/>
    <property type="project" value="UniProtKB-KW"/>
</dbReference>
<dbReference type="GO" id="GO:0031640">
    <property type="term" value="P:killing of cells of another organism"/>
    <property type="evidence" value="ECO:0007669"/>
    <property type="project" value="UniProtKB-KW"/>
</dbReference>
<dbReference type="GO" id="GO:0016042">
    <property type="term" value="P:lipid catabolic process"/>
    <property type="evidence" value="ECO:0007669"/>
    <property type="project" value="UniProtKB-KW"/>
</dbReference>
<dbReference type="CDD" id="cd08576">
    <property type="entry name" value="GDPD_like_SMaseD_PLD"/>
    <property type="match status" value="1"/>
</dbReference>
<dbReference type="Gene3D" id="3.20.20.190">
    <property type="entry name" value="Phosphatidylinositol (PI) phosphodiesterase"/>
    <property type="match status" value="1"/>
</dbReference>
<dbReference type="InterPro" id="IPR017946">
    <property type="entry name" value="PLC-like_Pdiesterase_TIM-brl"/>
</dbReference>
<dbReference type="Pfam" id="PF13653">
    <property type="entry name" value="GDPD_2"/>
    <property type="match status" value="1"/>
</dbReference>
<dbReference type="SUPFAM" id="SSF51695">
    <property type="entry name" value="PLC-like phosphodiesterases"/>
    <property type="match status" value="1"/>
</dbReference>
<feature type="chain" id="PRO_0000392800" description="Dermonecrotic toxin LdSicTox-alphaIB3aii">
    <location>
        <begin position="1" status="less than"/>
        <end position="273"/>
    </location>
</feature>
<feature type="active site" evidence="5">
    <location>
        <position position="5"/>
    </location>
</feature>
<feature type="active site" description="Nucleophile" evidence="5">
    <location>
        <position position="41"/>
    </location>
</feature>
<feature type="binding site" evidence="5">
    <location>
        <position position="25"/>
    </location>
    <ligand>
        <name>Mg(2+)</name>
        <dbReference type="ChEBI" id="CHEBI:18420"/>
    </ligand>
</feature>
<feature type="binding site" evidence="5">
    <location>
        <position position="27"/>
    </location>
    <ligand>
        <name>Mg(2+)</name>
        <dbReference type="ChEBI" id="CHEBI:18420"/>
    </ligand>
</feature>
<feature type="binding site" evidence="5">
    <location>
        <position position="85"/>
    </location>
    <ligand>
        <name>Mg(2+)</name>
        <dbReference type="ChEBI" id="CHEBI:18420"/>
    </ligand>
</feature>
<feature type="disulfide bond" evidence="3">
    <location>
        <begin position="45"/>
        <end position="51"/>
    </location>
</feature>
<feature type="disulfide bond" evidence="3">
    <location>
        <begin position="47"/>
        <end position="190"/>
    </location>
</feature>
<feature type="non-terminal residue">
    <location>
        <position position="1"/>
    </location>
</feature>
<reference key="1">
    <citation type="journal article" date="2009" name="Mol. Biol. Evol.">
        <title>Molecular evolution, functional variation, and proposed nomenclature of the gene family that includes sphingomyelinase D in sicariid spider venoms.</title>
        <authorList>
            <person name="Binford G.J."/>
            <person name="Bodner M.R."/>
            <person name="Cordes M.H."/>
            <person name="Baldwin K.L."/>
            <person name="Rynerson M.R."/>
            <person name="Burns S.N."/>
            <person name="Zobel-Thropp P.A."/>
        </authorList>
    </citation>
    <scope>NUCLEOTIDE SEQUENCE [MRNA]</scope>
    <scope>NOMENCLATURE</scope>
    <source>
        <tissue>Venom gland</tissue>
    </source>
</reference>
<name>A1MA2_LOXDE</name>
<protein>
    <recommendedName>
        <fullName evidence="6">Dermonecrotic toxin LdSicTox-alphaIB3aii</fullName>
        <ecNumber evidence="4">4.6.1.-</ecNumber>
    </recommendedName>
    <alternativeName>
        <fullName>Phospholipase D</fullName>
        <shortName>PLD</shortName>
    </alternativeName>
    <alternativeName>
        <fullName>Sphingomyelin phosphodiesterase D</fullName>
        <shortName>SMD</shortName>
        <shortName>SMase D</shortName>
        <shortName>Sphingomyelinase D</shortName>
    </alternativeName>
</protein>
<proteinExistence type="evidence at transcript level"/>
<sequence length="273" mass="30413">WIMGHMVNAIAQIDEFVNLGANSIETDVSFDKNANPEYTYHGIPCDCGRTCTKSEKFNVFLQGLQKATTPGDSKYQEKLVLVVFDLKSSSLYDNQASDAGKKLAKSLLQNYWKNGNNGGRAYIVLSIPNLAHYKLITGFKETLKTEGHPELMEKVGYDFSGNDDIDQVAKAYKKAGVTGHVWQSDGITNCLPRGLDRVKQAVANRDSSNGFINKVYYWTVDKRSTTRGALDAGVDGIMTNYPDVIADVLSESAYKSKFRIATYEDNPWETFKN</sequence>
<keyword id="KW-0204">Cytolysis</keyword>
<keyword id="KW-1061">Dermonecrotic toxin</keyword>
<keyword id="KW-1015">Disulfide bond</keyword>
<keyword id="KW-0354">Hemolysis</keyword>
<keyword id="KW-0442">Lipid degradation</keyword>
<keyword id="KW-0443">Lipid metabolism</keyword>
<keyword id="KW-0456">Lyase</keyword>
<keyword id="KW-0460">Magnesium</keyword>
<keyword id="KW-0479">Metal-binding</keyword>
<keyword id="KW-0964">Secreted</keyword>
<keyword id="KW-0800">Toxin</keyword>
<evidence type="ECO:0000250" key="1">
    <source>
        <dbReference type="UniProtKB" id="A0A0D4WTV1"/>
    </source>
</evidence>
<evidence type="ECO:0000250" key="2">
    <source>
        <dbReference type="UniProtKB" id="A0A0D4WV12"/>
    </source>
</evidence>
<evidence type="ECO:0000250" key="3">
    <source>
        <dbReference type="UniProtKB" id="P0CE80"/>
    </source>
</evidence>
<evidence type="ECO:0000250" key="4">
    <source>
        <dbReference type="UniProtKB" id="Q4ZFU2"/>
    </source>
</evidence>
<evidence type="ECO:0000250" key="5">
    <source>
        <dbReference type="UniProtKB" id="Q8I914"/>
    </source>
</evidence>
<evidence type="ECO:0000303" key="6">
    <source>
    </source>
</evidence>
<evidence type="ECO:0000305" key="7"/>
<evidence type="ECO:0000305" key="8">
    <source>
    </source>
</evidence>
<comment type="function">
    <text evidence="1 3">Dermonecrotic toxins cleave the phosphodiester linkage between the phosphate and headgroup of certain phospholipids (sphingolipid and lysolipid substrates), forming an alcohol (often choline) and a cyclic phosphate (By similarity). This toxin acts on sphingomyelin (SM) (By similarity). It may also act on ceramide phosphoethanolamine (CPE), lysophosphatidylcholine (LPC) and lysophosphatidylethanolamine (LPE), but not on lysophosphatidylserine (LPS), and lysophosphatidylglycerol (LPG) (By similarity). It acts by transphosphatidylation, releasing exclusively cyclic phosphate products as second products (By similarity). Induces dermonecrosis, hemolysis, increased vascular permeability, edema, inflammatory response, and platelet aggregation (By similarity).</text>
</comment>
<comment type="catalytic activity">
    <reaction evidence="1">
        <text>an N-(acyl)-sphingosylphosphocholine = an N-(acyl)-sphingosyl-1,3-cyclic phosphate + choline</text>
        <dbReference type="Rhea" id="RHEA:60652"/>
        <dbReference type="ChEBI" id="CHEBI:15354"/>
        <dbReference type="ChEBI" id="CHEBI:64583"/>
        <dbReference type="ChEBI" id="CHEBI:143892"/>
    </reaction>
</comment>
<comment type="catalytic activity">
    <reaction evidence="1">
        <text>an N-(acyl)-sphingosylphosphoethanolamine = an N-(acyl)-sphingosyl-1,3-cyclic phosphate + ethanolamine</text>
        <dbReference type="Rhea" id="RHEA:60648"/>
        <dbReference type="ChEBI" id="CHEBI:57603"/>
        <dbReference type="ChEBI" id="CHEBI:143891"/>
        <dbReference type="ChEBI" id="CHEBI:143892"/>
    </reaction>
</comment>
<comment type="catalytic activity">
    <reaction evidence="1">
        <text>a 1-acyl-sn-glycero-3-phosphocholine = a 1-acyl-sn-glycero-2,3-cyclic phosphate + choline</text>
        <dbReference type="Rhea" id="RHEA:60700"/>
        <dbReference type="ChEBI" id="CHEBI:15354"/>
        <dbReference type="ChEBI" id="CHEBI:58168"/>
        <dbReference type="ChEBI" id="CHEBI:143947"/>
    </reaction>
</comment>
<comment type="catalytic activity">
    <reaction evidence="1">
        <text>a 1-acyl-sn-glycero-3-phosphoethanolamine = a 1-acyl-sn-glycero-2,3-cyclic phosphate + ethanolamine</text>
        <dbReference type="Rhea" id="RHEA:60704"/>
        <dbReference type="ChEBI" id="CHEBI:57603"/>
        <dbReference type="ChEBI" id="CHEBI:64381"/>
        <dbReference type="ChEBI" id="CHEBI:143947"/>
    </reaction>
</comment>
<comment type="cofactor">
    <cofactor evidence="5">
        <name>Mg(2+)</name>
        <dbReference type="ChEBI" id="CHEBI:18420"/>
    </cofactor>
    <text evidence="5">Binds 1 Mg(2+) ion per subunit.</text>
</comment>
<comment type="subcellular location">
    <subcellularLocation>
        <location evidence="8">Secreted</location>
    </subcellularLocation>
</comment>
<comment type="tissue specificity">
    <text evidence="8">Expressed by the venom gland.</text>
</comment>
<comment type="similarity">
    <text evidence="7">Belongs to the arthropod phospholipase D family. Class II subfamily.</text>
</comment>
<comment type="caution">
    <text evidence="1 2 4">The most common activity assay for dermonecrotic toxins detects enzymatic activity by monitoring choline release from substrate. Liberation of choline from sphingomyelin (SM) or lysophosphatidylcholine (LPC) is commonly assumed to result from substrate hydrolysis, giving either ceramide-1-phosphate (C1P) or lysophosphatidic acid (LPA), respectively, as a second product. However, two studies from Lajoie and colleagues (2013 and 2015) report the observation of exclusive formation of cyclic phosphate products as second products, resulting from intramolecular transphosphatidylation. Cyclic phosphates have vastly different biological properties from their monoester counterparts, and they may be relevant to the pathology of brown spider envenomation.</text>
</comment>
<accession>C0JAX4</accession>